<comment type="subcellular location">
    <subcellularLocation>
        <location evidence="3">Cell inner membrane</location>
        <topology evidence="3">Multi-pass membrane protein</topology>
    </subcellularLocation>
</comment>
<comment type="miscellaneous">
    <text evidence="3">Encoded in the E14 prophage.</text>
</comment>
<comment type="caution">
    <text evidence="3">Could be the product of a pseudogene.</text>
</comment>
<reference key="1">
    <citation type="journal article" date="1997" name="Science">
        <title>The complete genome sequence of Escherichia coli K-12.</title>
        <authorList>
            <person name="Blattner F.R."/>
            <person name="Plunkett G. III"/>
            <person name="Bloch C.A."/>
            <person name="Perna N.T."/>
            <person name="Burland V."/>
            <person name="Riley M."/>
            <person name="Collado-Vides J."/>
            <person name="Glasner J.D."/>
            <person name="Rode C.K."/>
            <person name="Mayhew G.F."/>
            <person name="Gregor J."/>
            <person name="Davis N.W."/>
            <person name="Kirkpatrick H.A."/>
            <person name="Goeden M.A."/>
            <person name="Rose D.J."/>
            <person name="Mau B."/>
            <person name="Shao Y."/>
        </authorList>
    </citation>
    <scope>NUCLEOTIDE SEQUENCE [LARGE SCALE GENOMIC DNA]</scope>
    <source>
        <strain>K12 / MG1655 / ATCC 47076</strain>
    </source>
</reference>
<reference key="2">
    <citation type="journal article" date="2006" name="Mol. Syst. Biol.">
        <title>Highly accurate genome sequences of Escherichia coli K-12 strains MG1655 and W3110.</title>
        <authorList>
            <person name="Hayashi K."/>
            <person name="Morooka N."/>
            <person name="Yamamoto Y."/>
            <person name="Fujita K."/>
            <person name="Isono K."/>
            <person name="Choi S."/>
            <person name="Ohtsubo E."/>
            <person name="Baba T."/>
            <person name="Wanner B.L."/>
            <person name="Mori H."/>
            <person name="Horiuchi T."/>
        </authorList>
    </citation>
    <scope>NUCLEOTIDE SEQUENCE [LARGE SCALE GENOMIC DNA]</scope>
    <source>
        <strain>K12 / W3110 / ATCC 27325 / DSM 5911</strain>
    </source>
</reference>
<accession>P75971</accession>
<accession>A0A385XM66</accession>
<accession>Q2MBH9</accession>
<sequence length="103" mass="10963">MVNAAQRTRVKVEADNRPSVDTHPPGVQPSPGTGGTRHHNFMLCVVLAVPVFSLVLSGTALFTKQRRVSPDDGLITRPILIAVATGALLCFVEKLTDRAGSIC</sequence>
<protein>
    <recommendedName>
        <fullName>Putative protein YmfH</fullName>
    </recommendedName>
</protein>
<evidence type="ECO:0000255" key="1"/>
<evidence type="ECO:0000256" key="2">
    <source>
        <dbReference type="SAM" id="MobiDB-lite"/>
    </source>
</evidence>
<evidence type="ECO:0000305" key="3"/>
<dbReference type="EMBL" id="U00096">
    <property type="protein sequence ID" value="AYC08191.1"/>
    <property type="molecule type" value="Genomic_DNA"/>
</dbReference>
<dbReference type="EMBL" id="AP009048">
    <property type="protein sequence ID" value="BAE76377.1"/>
    <property type="molecule type" value="Genomic_DNA"/>
</dbReference>
<dbReference type="PIR" id="C64859">
    <property type="entry name" value="C64859"/>
</dbReference>
<dbReference type="BioGRID" id="4259573">
    <property type="interactions" value="6"/>
</dbReference>
<dbReference type="FunCoup" id="P75971">
    <property type="interactions" value="4"/>
</dbReference>
<dbReference type="IntAct" id="P75971">
    <property type="interactions" value="2"/>
</dbReference>
<dbReference type="EnsemblBacteria" id="AYC08191">
    <property type="protein sequence ID" value="AYC08191"/>
    <property type="gene ID" value="b1142"/>
</dbReference>
<dbReference type="KEGG" id="ecj:JW1128"/>
<dbReference type="HOGENOM" id="CLU_2011767_0_0_6"/>
<dbReference type="InParanoid" id="P75971"/>
<dbReference type="BioCyc" id="EcoCyc:G6586-MONOMER"/>
<dbReference type="Proteomes" id="UP000000625">
    <property type="component" value="Chromosome"/>
</dbReference>
<dbReference type="GO" id="GO:0005886">
    <property type="term" value="C:plasma membrane"/>
    <property type="evidence" value="ECO:0007669"/>
    <property type="project" value="UniProtKB-SubCell"/>
</dbReference>
<gene>
    <name type="primary">ymfH</name>
    <name type="ordered locus">b1142</name>
    <name type="ordered locus">JW1128</name>
</gene>
<organism>
    <name type="scientific">Escherichia coli (strain K12)</name>
    <dbReference type="NCBI Taxonomy" id="83333"/>
    <lineage>
        <taxon>Bacteria</taxon>
        <taxon>Pseudomonadati</taxon>
        <taxon>Pseudomonadota</taxon>
        <taxon>Gammaproteobacteria</taxon>
        <taxon>Enterobacterales</taxon>
        <taxon>Enterobacteriaceae</taxon>
        <taxon>Escherichia</taxon>
    </lineage>
</organism>
<feature type="chain" id="PRO_0000169842" description="Putative protein YmfH">
    <location>
        <begin position="1"/>
        <end position="103"/>
    </location>
</feature>
<feature type="transmembrane region" description="Helical" evidence="1">
    <location>
        <begin position="42"/>
        <end position="62"/>
    </location>
</feature>
<feature type="transmembrane region" description="Helical" evidence="1">
    <location>
        <begin position="73"/>
        <end position="93"/>
    </location>
</feature>
<feature type="region of interest" description="Disordered" evidence="2">
    <location>
        <begin position="1"/>
        <end position="34"/>
    </location>
</feature>
<feature type="compositionally biased region" description="Basic and acidic residues" evidence="2">
    <location>
        <begin position="10"/>
        <end position="20"/>
    </location>
</feature>
<proteinExistence type="uncertain"/>
<name>YMFH_ECOLI</name>
<keyword id="KW-0997">Cell inner membrane</keyword>
<keyword id="KW-1003">Cell membrane</keyword>
<keyword id="KW-0472">Membrane</keyword>
<keyword id="KW-1185">Reference proteome</keyword>
<keyword id="KW-0812">Transmembrane</keyword>
<keyword id="KW-1133">Transmembrane helix</keyword>